<gene>
    <name type="primary">yfjD</name>
    <name type="ordered locus">BSU08140</name>
</gene>
<organism>
    <name type="scientific">Bacillus subtilis (strain 168)</name>
    <dbReference type="NCBI Taxonomy" id="224308"/>
    <lineage>
        <taxon>Bacteria</taxon>
        <taxon>Bacillati</taxon>
        <taxon>Bacillota</taxon>
        <taxon>Bacilli</taxon>
        <taxon>Bacillales</taxon>
        <taxon>Bacillaceae</taxon>
        <taxon>Bacillus</taxon>
    </lineage>
</organism>
<name>YFJD_BACSU</name>
<feature type="signal peptide" evidence="2">
    <location>
        <begin position="1"/>
        <end position="29"/>
    </location>
</feature>
<feature type="chain" id="PRO_0000013698" description="Uncharacterized lipoprotein YfjD">
    <location>
        <begin position="30"/>
        <end position="185"/>
    </location>
</feature>
<feature type="transmembrane region" description="Helical" evidence="1">
    <location>
        <begin position="45"/>
        <end position="67"/>
    </location>
</feature>
<feature type="lipid moiety-binding region" description="N-palmitoyl cysteine" evidence="2">
    <location>
        <position position="30"/>
    </location>
</feature>
<feature type="lipid moiety-binding region" description="S-diacylglycerol cysteine" evidence="2">
    <location>
        <position position="30"/>
    </location>
</feature>
<sequence>MKNQEIIEVKSKMFLRIWAFVGSAGMGLACLWLFYMGITFQTKYYLLAIPAGFLFTLFCLYLFIIFFPAFTPRGNTIFRIKTGKNGEVFTDKVSVTFTDIKKIEMSRHKFSLKGIFQEDILIQTVDQKTIRIPTWNIIPNPLFFEAVERYILPHLNEEAKSNWIGQFTDIQRSAYLKEFENHPKL</sequence>
<reference key="1">
    <citation type="journal article" date="1997" name="Nature">
        <title>The complete genome sequence of the Gram-positive bacterium Bacillus subtilis.</title>
        <authorList>
            <person name="Kunst F."/>
            <person name="Ogasawara N."/>
            <person name="Moszer I."/>
            <person name="Albertini A.M."/>
            <person name="Alloni G."/>
            <person name="Azevedo V."/>
            <person name="Bertero M.G."/>
            <person name="Bessieres P."/>
            <person name="Bolotin A."/>
            <person name="Borchert S."/>
            <person name="Borriss R."/>
            <person name="Boursier L."/>
            <person name="Brans A."/>
            <person name="Braun M."/>
            <person name="Brignell S.C."/>
            <person name="Bron S."/>
            <person name="Brouillet S."/>
            <person name="Bruschi C.V."/>
            <person name="Caldwell B."/>
            <person name="Capuano V."/>
            <person name="Carter N.M."/>
            <person name="Choi S.-K."/>
            <person name="Codani J.-J."/>
            <person name="Connerton I.F."/>
            <person name="Cummings N.J."/>
            <person name="Daniel R.A."/>
            <person name="Denizot F."/>
            <person name="Devine K.M."/>
            <person name="Duesterhoeft A."/>
            <person name="Ehrlich S.D."/>
            <person name="Emmerson P.T."/>
            <person name="Entian K.-D."/>
            <person name="Errington J."/>
            <person name="Fabret C."/>
            <person name="Ferrari E."/>
            <person name="Foulger D."/>
            <person name="Fritz C."/>
            <person name="Fujita M."/>
            <person name="Fujita Y."/>
            <person name="Fuma S."/>
            <person name="Galizzi A."/>
            <person name="Galleron N."/>
            <person name="Ghim S.-Y."/>
            <person name="Glaser P."/>
            <person name="Goffeau A."/>
            <person name="Golightly E.J."/>
            <person name="Grandi G."/>
            <person name="Guiseppi G."/>
            <person name="Guy B.J."/>
            <person name="Haga K."/>
            <person name="Haiech J."/>
            <person name="Harwood C.R."/>
            <person name="Henaut A."/>
            <person name="Hilbert H."/>
            <person name="Holsappel S."/>
            <person name="Hosono S."/>
            <person name="Hullo M.-F."/>
            <person name="Itaya M."/>
            <person name="Jones L.-M."/>
            <person name="Joris B."/>
            <person name="Karamata D."/>
            <person name="Kasahara Y."/>
            <person name="Klaerr-Blanchard M."/>
            <person name="Klein C."/>
            <person name="Kobayashi Y."/>
            <person name="Koetter P."/>
            <person name="Koningstein G."/>
            <person name="Krogh S."/>
            <person name="Kumano M."/>
            <person name="Kurita K."/>
            <person name="Lapidus A."/>
            <person name="Lardinois S."/>
            <person name="Lauber J."/>
            <person name="Lazarevic V."/>
            <person name="Lee S.-M."/>
            <person name="Levine A."/>
            <person name="Liu H."/>
            <person name="Masuda S."/>
            <person name="Mauel C."/>
            <person name="Medigue C."/>
            <person name="Medina N."/>
            <person name="Mellado R.P."/>
            <person name="Mizuno M."/>
            <person name="Moestl D."/>
            <person name="Nakai S."/>
            <person name="Noback M."/>
            <person name="Noone D."/>
            <person name="O'Reilly M."/>
            <person name="Ogawa K."/>
            <person name="Ogiwara A."/>
            <person name="Oudega B."/>
            <person name="Park S.-H."/>
            <person name="Parro V."/>
            <person name="Pohl T.M."/>
            <person name="Portetelle D."/>
            <person name="Porwollik S."/>
            <person name="Prescott A.M."/>
            <person name="Presecan E."/>
            <person name="Pujic P."/>
            <person name="Purnelle B."/>
            <person name="Rapoport G."/>
            <person name="Rey M."/>
            <person name="Reynolds S."/>
            <person name="Rieger M."/>
            <person name="Rivolta C."/>
            <person name="Rocha E."/>
            <person name="Roche B."/>
            <person name="Rose M."/>
            <person name="Sadaie Y."/>
            <person name="Sato T."/>
            <person name="Scanlan E."/>
            <person name="Schleich S."/>
            <person name="Schroeter R."/>
            <person name="Scoffone F."/>
            <person name="Sekiguchi J."/>
            <person name="Sekowska A."/>
            <person name="Seror S.J."/>
            <person name="Serror P."/>
            <person name="Shin B.-S."/>
            <person name="Soldo B."/>
            <person name="Sorokin A."/>
            <person name="Tacconi E."/>
            <person name="Takagi T."/>
            <person name="Takahashi H."/>
            <person name="Takemaru K."/>
            <person name="Takeuchi M."/>
            <person name="Tamakoshi A."/>
            <person name="Tanaka T."/>
            <person name="Terpstra P."/>
            <person name="Tognoni A."/>
            <person name="Tosato V."/>
            <person name="Uchiyama S."/>
            <person name="Vandenbol M."/>
            <person name="Vannier F."/>
            <person name="Vassarotti A."/>
            <person name="Viari A."/>
            <person name="Wambutt R."/>
            <person name="Wedler E."/>
            <person name="Wedler H."/>
            <person name="Weitzenegger T."/>
            <person name="Winters P."/>
            <person name="Wipat A."/>
            <person name="Yamamoto H."/>
            <person name="Yamane K."/>
            <person name="Yasumoto K."/>
            <person name="Yata K."/>
            <person name="Yoshida K."/>
            <person name="Yoshikawa H.-F."/>
            <person name="Zumstein E."/>
            <person name="Yoshikawa H."/>
            <person name="Danchin A."/>
        </authorList>
    </citation>
    <scope>NUCLEOTIDE SEQUENCE [LARGE SCALE GENOMIC DNA]</scope>
    <source>
        <strain>168</strain>
    </source>
</reference>
<protein>
    <recommendedName>
        <fullName>Uncharacterized lipoprotein YfjD</fullName>
    </recommendedName>
</protein>
<dbReference type="EMBL" id="AL009126">
    <property type="protein sequence ID" value="CAB12643.1"/>
    <property type="molecule type" value="Genomic_DNA"/>
</dbReference>
<dbReference type="PIR" id="H69805">
    <property type="entry name" value="H69805"/>
</dbReference>
<dbReference type="RefSeq" id="NP_388695.1">
    <property type="nucleotide sequence ID" value="NC_000964.3"/>
</dbReference>
<dbReference type="RefSeq" id="WP_003244496.1">
    <property type="nucleotide sequence ID" value="NZ_OZ025638.1"/>
</dbReference>
<dbReference type="SMR" id="O31555"/>
<dbReference type="FunCoup" id="O31555">
    <property type="interactions" value="9"/>
</dbReference>
<dbReference type="STRING" id="224308.BSU08140"/>
<dbReference type="PaxDb" id="224308-BSU08140"/>
<dbReference type="EnsemblBacteria" id="CAB12643">
    <property type="protein sequence ID" value="CAB12643"/>
    <property type="gene ID" value="BSU_08140"/>
</dbReference>
<dbReference type="GeneID" id="936158"/>
<dbReference type="KEGG" id="bsu:BSU08140"/>
<dbReference type="PATRIC" id="fig|224308.179.peg.880"/>
<dbReference type="eggNOG" id="ENOG5031I9E">
    <property type="taxonomic scope" value="Bacteria"/>
</dbReference>
<dbReference type="InParanoid" id="O31555"/>
<dbReference type="OrthoDB" id="2905500at2"/>
<dbReference type="BioCyc" id="BSUB:BSU08140-MONOMER"/>
<dbReference type="Proteomes" id="UP000001570">
    <property type="component" value="Chromosome"/>
</dbReference>
<dbReference type="GO" id="GO:0005886">
    <property type="term" value="C:plasma membrane"/>
    <property type="evidence" value="ECO:0007669"/>
    <property type="project" value="UniProtKB-SubCell"/>
</dbReference>
<dbReference type="InterPro" id="IPR035324">
    <property type="entry name" value="DUF5381"/>
</dbReference>
<dbReference type="Pfam" id="PF17353">
    <property type="entry name" value="DUF5381"/>
    <property type="match status" value="1"/>
</dbReference>
<dbReference type="PROSITE" id="PS51257">
    <property type="entry name" value="PROKAR_LIPOPROTEIN"/>
    <property type="match status" value="1"/>
</dbReference>
<comment type="subcellular location">
    <subcellularLocation>
        <location evidence="2">Cell membrane</location>
        <topology evidence="2">Lipid-anchor</topology>
    </subcellularLocation>
</comment>
<comment type="similarity">
    <text evidence="3">To B.subtilis YfjE.</text>
</comment>
<proteinExistence type="inferred from homology"/>
<keyword id="KW-1003">Cell membrane</keyword>
<keyword id="KW-0449">Lipoprotein</keyword>
<keyword id="KW-0472">Membrane</keyword>
<keyword id="KW-0564">Palmitate</keyword>
<keyword id="KW-1185">Reference proteome</keyword>
<keyword id="KW-0732">Signal</keyword>
<keyword id="KW-0812">Transmembrane</keyword>
<keyword id="KW-1133">Transmembrane helix</keyword>
<evidence type="ECO:0000255" key="1"/>
<evidence type="ECO:0000255" key="2">
    <source>
        <dbReference type="PROSITE-ProRule" id="PRU00303"/>
    </source>
</evidence>
<evidence type="ECO:0000305" key="3"/>
<accession>O31555</accession>